<dbReference type="EMBL" id="BX548174">
    <property type="protein sequence ID" value="CAE19010.1"/>
    <property type="molecule type" value="Genomic_DNA"/>
</dbReference>
<dbReference type="RefSeq" id="WP_011132185.1">
    <property type="nucleotide sequence ID" value="NC_005072.1"/>
</dbReference>
<dbReference type="SMR" id="Q7V2C9"/>
<dbReference type="STRING" id="59919.PMM0551"/>
<dbReference type="KEGG" id="pmm:PMM0551"/>
<dbReference type="eggNOG" id="COG4451">
    <property type="taxonomic scope" value="Bacteria"/>
</dbReference>
<dbReference type="HOGENOM" id="CLU_098114_2_0_3"/>
<dbReference type="OrthoDB" id="9788955at2"/>
<dbReference type="Proteomes" id="UP000001026">
    <property type="component" value="Chromosome"/>
</dbReference>
<dbReference type="GO" id="GO:0031470">
    <property type="term" value="C:carboxysome"/>
    <property type="evidence" value="ECO:0007669"/>
    <property type="project" value="UniProtKB-SubCell"/>
</dbReference>
<dbReference type="GO" id="GO:0016984">
    <property type="term" value="F:ribulose-bisphosphate carboxylase activity"/>
    <property type="evidence" value="ECO:0007669"/>
    <property type="project" value="UniProtKB-UniRule"/>
</dbReference>
<dbReference type="GO" id="GO:0009853">
    <property type="term" value="P:photorespiration"/>
    <property type="evidence" value="ECO:0007669"/>
    <property type="project" value="UniProtKB-KW"/>
</dbReference>
<dbReference type="GO" id="GO:0019253">
    <property type="term" value="P:reductive pentose-phosphate cycle"/>
    <property type="evidence" value="ECO:0007669"/>
    <property type="project" value="UniProtKB-UniRule"/>
</dbReference>
<dbReference type="CDD" id="cd03527">
    <property type="entry name" value="RuBisCO_small"/>
    <property type="match status" value="1"/>
</dbReference>
<dbReference type="Gene3D" id="3.30.190.10">
    <property type="entry name" value="Ribulose bisphosphate carboxylase, small subunit"/>
    <property type="match status" value="1"/>
</dbReference>
<dbReference type="HAMAP" id="MF_00859">
    <property type="entry name" value="RuBisCO_S_bact"/>
    <property type="match status" value="1"/>
</dbReference>
<dbReference type="InterPro" id="IPR024681">
    <property type="entry name" value="RuBisCO_ssu"/>
</dbReference>
<dbReference type="InterPro" id="IPR000894">
    <property type="entry name" value="RuBisCO_ssu_dom"/>
</dbReference>
<dbReference type="InterPro" id="IPR036385">
    <property type="entry name" value="RuBisCO_ssu_sf"/>
</dbReference>
<dbReference type="PANTHER" id="PTHR31262">
    <property type="entry name" value="RIBULOSE BISPHOSPHATE CARBOXYLASE SMALL CHAIN 1, CHLOROPLASTIC"/>
    <property type="match status" value="1"/>
</dbReference>
<dbReference type="Pfam" id="PF00101">
    <property type="entry name" value="RuBisCO_small"/>
    <property type="match status" value="1"/>
</dbReference>
<dbReference type="SMART" id="SM00961">
    <property type="entry name" value="RuBisCO_small"/>
    <property type="match status" value="1"/>
</dbReference>
<dbReference type="SUPFAM" id="SSF55239">
    <property type="entry name" value="RuBisCO, small subunit"/>
    <property type="match status" value="1"/>
</dbReference>
<organism>
    <name type="scientific">Prochlorococcus marinus subsp. pastoris (strain CCMP1986 / NIES-2087 / MED4)</name>
    <dbReference type="NCBI Taxonomy" id="59919"/>
    <lineage>
        <taxon>Bacteria</taxon>
        <taxon>Bacillati</taxon>
        <taxon>Cyanobacteriota</taxon>
        <taxon>Cyanophyceae</taxon>
        <taxon>Synechococcales</taxon>
        <taxon>Prochlorococcaceae</taxon>
        <taxon>Prochlorococcus</taxon>
    </lineage>
</organism>
<sequence length="113" mass="12940">MPFQSSVGDYQTVATLETFGFLPPMTQEEIYDQIAYIIAQGWSPVIEHVHPSGSMQTYWSYWKLPFFGEKDLNLVVSELEACHRAYPDHHVRIIGYDAYTQSQGTAFAVFQGR</sequence>
<feature type="chain" id="PRO_0000452049" description="Ribulose bisphosphate carboxylase small subunit">
    <location>
        <begin position="1"/>
        <end position="113"/>
    </location>
</feature>
<proteinExistence type="evidence at protein level"/>
<reference key="1">
    <citation type="journal article" date="2003" name="Nature">
        <title>Genome divergence in two Prochlorococcus ecotypes reflects oceanic niche differentiation.</title>
        <authorList>
            <person name="Rocap G."/>
            <person name="Larimer F.W."/>
            <person name="Lamerdin J.E."/>
            <person name="Malfatti S."/>
            <person name="Chain P."/>
            <person name="Ahlgren N.A."/>
            <person name="Arellano A."/>
            <person name="Coleman M."/>
            <person name="Hauser L."/>
            <person name="Hess W.R."/>
            <person name="Johnson Z.I."/>
            <person name="Land M.L."/>
            <person name="Lindell D."/>
            <person name="Post A.F."/>
            <person name="Regala W."/>
            <person name="Shah M."/>
            <person name="Shaw S.L."/>
            <person name="Steglich C."/>
            <person name="Sullivan M.B."/>
            <person name="Ting C.S."/>
            <person name="Tolonen A."/>
            <person name="Webb E.A."/>
            <person name="Zinser E.R."/>
            <person name="Chisholm S.W."/>
        </authorList>
    </citation>
    <scope>NUCLEOTIDE SEQUENCE [LARGE SCALE GENOMIC DNA]</scope>
    <source>
        <strain>CCMP1986 / NIES-2087 / MED4</strain>
    </source>
</reference>
<reference key="2">
    <citation type="journal article" date="2012" name="J. Bacteriol.">
        <title>Isolation and characterization of the Prochlorococcus carboxysome reveal the presence of the novel shell protein CsoS1D.</title>
        <authorList>
            <person name="Roberts E.W."/>
            <person name="Cai F."/>
            <person name="Kerfeld C.A."/>
            <person name="Cannon G.C."/>
            <person name="Heinhorst S."/>
        </authorList>
    </citation>
    <scope>FUNCTION</scope>
    <scope>CATALYTIC ACTIVITY</scope>
    <scope>BIOPHYSICOCHEMICAL PROPERTIES</scope>
    <scope>PROTEIN ABUNDANCE</scope>
    <scope>SUBCELLULAR LOCATION</scope>
    <source>
        <strain>CCMP1986 / NIES-2087 / MED4</strain>
    </source>
</reference>
<accession>Q7V2C9</accession>
<gene>
    <name evidence="2 4" type="primary">cbbS</name>
    <name evidence="2" type="synonym">rbcS</name>
    <name type="ordered locus">PMM0551</name>
</gene>
<evidence type="ECO:0000250" key="1">
    <source>
        <dbReference type="UniProtKB" id="P45686"/>
    </source>
</evidence>
<evidence type="ECO:0000255" key="2">
    <source>
        <dbReference type="HAMAP-Rule" id="MF_00859"/>
    </source>
</evidence>
<evidence type="ECO:0000269" key="3">
    <source>
    </source>
</evidence>
<evidence type="ECO:0000303" key="4">
    <source>
    </source>
</evidence>
<name>RBS_PROMP</name>
<comment type="function">
    <text evidence="3">RuBisCO catalyzes two reactions: the carboxylation of D-ribulose 1,5-bisphosphate, the primary event in carbon dioxide fixation, as well as the oxidative fragmentation of the pentose substrate in the photorespiration process. Both reactions occur simultaneously and in competition at the same active site. Although the small subunit is not catalytic it is essential for maximal activity (PubMed:22155772). There are estimated to be 152 RuBisCO holoenzymes per carboxysome (PubMed:22155772).</text>
</comment>
<comment type="biophysicochemical properties">
    <kinetics>
        <KM evidence="3">169.3 uM for D-ribulose 1,5-bisphosphate</KM>
        <Vmax evidence="3">1.28 umol/min/mg enzyme</Vmax>
        <text evidence="3">From purified carboxysomes.</text>
    </kinetics>
</comment>
<comment type="subunit">
    <text evidence="1 2">Heterohexadecamer of 8 large and 8 small subunits. Forms a CsoS2-CsoS1-RuBisCO complex.</text>
</comment>
<comment type="subcellular location">
    <subcellularLocation>
        <location evidence="2 3">Carboxysome</location>
    </subcellularLocation>
    <text evidence="3">This bacterium makes alpha-type carboxysomes.</text>
</comment>
<comment type="miscellaneous">
    <text evidence="2">The basic functional RuBisCO is composed of a large chain homodimer in a 'head-to-tail' conformation. In form I RuBisCO this homodimer is arranged in a barrel-like tetramer with the small subunits forming a tetrameric 'cap' on each end of the 'barrel'.</text>
</comment>
<comment type="similarity">
    <text evidence="2">Belongs to the RuBisCO small chain family.</text>
</comment>
<keyword id="KW-1283">Bacterial microcompartment</keyword>
<keyword id="KW-0113">Calvin cycle</keyword>
<keyword id="KW-0120">Carbon dioxide fixation</keyword>
<keyword id="KW-1282">Carboxysome</keyword>
<keyword id="KW-0601">Photorespiration</keyword>
<keyword id="KW-0602">Photosynthesis</keyword>
<protein>
    <recommendedName>
        <fullName evidence="2">Ribulose bisphosphate carboxylase small subunit</fullName>
        <shortName evidence="2">RuBisCO small subunit</shortName>
    </recommendedName>
</protein>